<comment type="function">
    <text evidence="1">Modulates cell-to-cell trafficking.</text>
</comment>
<comment type="subunit">
    <text evidence="6">Interacts with ACBP6; interaction occurs at the plasma membrane.</text>
</comment>
<comment type="subunit">
    <text evidence="11">(Microbial infection) Interacts with Grapevine fanleaf virus (GFLV) 2B-MP.</text>
</comment>
<comment type="subcellular location">
    <subcellularLocation>
        <location evidence="6">Cell membrane</location>
        <topology evidence="1">Single-pass type I membrane protein</topology>
    </subcellularLocation>
    <subcellularLocation>
        <location evidence="5 6">Cell junction</location>
        <location evidence="5 6">Plasmodesma</location>
    </subcellularLocation>
    <text evidence="5">Co-localizes with the Grapevine fanleaf virus (GFLV) 2B-MP at the base of tubules within modified plasmodesmata (PubMed:20886105).</text>
</comment>
<comment type="tissue specificity">
    <text evidence="4 6">Highly expressed in pollen, lateral root and elongation zone (PubMed:19704520). Higher expression in the reproductive tissues (flowers and buds) than in vegetative organs (leaves and stems). High expression in shoot and root phloem companion cells (at protein level) (PubMed:28786767).</text>
</comment>
<comment type="disruption phenotype">
    <text evidence="6">Affects accumulation of ACBP6 in the phloem.</text>
</comment>
<comment type="similarity">
    <text evidence="10">Belongs to the cysteine-rich repeat secretory protein family. Plasmodesmata-located proteins (PDLD) subfamily.</text>
</comment>
<comment type="caution">
    <text evidence="10">PDLPs were initially named Cysteine-rich secretory proteins based on a classification work that failed to predict the transmembrane region at the C-terminus (PubMed:11402176). However, it was later shown that PDLPs are membrane proteins.</text>
</comment>
<comment type="sequence caution" evidence="10">
    <conflict type="erroneous gene model prediction">
        <sequence resource="EMBL-CDS" id="CAB82676"/>
    </conflict>
</comment>
<name>PDLP8_ARATH</name>
<accession>Q6NKQ9</accession>
<accession>Q9LZZ1</accession>
<organism>
    <name type="scientific">Arabidopsis thaliana</name>
    <name type="common">Mouse-ear cress</name>
    <dbReference type="NCBI Taxonomy" id="3702"/>
    <lineage>
        <taxon>Eukaryota</taxon>
        <taxon>Viridiplantae</taxon>
        <taxon>Streptophyta</taxon>
        <taxon>Embryophyta</taxon>
        <taxon>Tracheophyta</taxon>
        <taxon>Spermatophyta</taxon>
        <taxon>Magnoliopsida</taxon>
        <taxon>eudicotyledons</taxon>
        <taxon>Gunneridae</taxon>
        <taxon>Pentapetalae</taxon>
        <taxon>rosids</taxon>
        <taxon>malvids</taxon>
        <taxon>Brassicales</taxon>
        <taxon>Brassicaceae</taxon>
        <taxon>Camelineae</taxon>
        <taxon>Arabidopsis</taxon>
    </lineage>
</organism>
<keyword id="KW-0002">3D-structure</keyword>
<keyword id="KW-0965">Cell junction</keyword>
<keyword id="KW-1003">Cell membrane</keyword>
<keyword id="KW-1015">Disulfide bond</keyword>
<keyword id="KW-0945">Host-virus interaction</keyword>
<keyword id="KW-0472">Membrane</keyword>
<keyword id="KW-1185">Reference proteome</keyword>
<keyword id="KW-0677">Repeat</keyword>
<keyword id="KW-0732">Signal</keyword>
<keyword id="KW-0812">Transmembrane</keyword>
<keyword id="KW-1133">Transmembrane helix</keyword>
<keyword id="KW-0813">Transport</keyword>
<protein>
    <recommendedName>
        <fullName evidence="9">Plasmodesmata-located protein 8</fullName>
        <shortName evidence="8">PD-located protein 8</shortName>
    </recommendedName>
    <alternativeName>
        <fullName evidence="7">Cysteine-rich repeat secretory protein 15</fullName>
    </alternativeName>
</protein>
<dbReference type="EMBL" id="AL162295">
    <property type="protein sequence ID" value="CAB82676.1"/>
    <property type="status" value="ALT_SEQ"/>
    <property type="molecule type" value="Genomic_DNA"/>
</dbReference>
<dbReference type="EMBL" id="CP002686">
    <property type="protein sequence ID" value="AEE80100.1"/>
    <property type="molecule type" value="Genomic_DNA"/>
</dbReference>
<dbReference type="EMBL" id="BT012634">
    <property type="protein sequence ID" value="AAT06453.1"/>
    <property type="molecule type" value="mRNA"/>
</dbReference>
<dbReference type="EMBL" id="AK229791">
    <property type="protein sequence ID" value="BAF01623.1"/>
    <property type="molecule type" value="mRNA"/>
</dbReference>
<dbReference type="PIR" id="T47883">
    <property type="entry name" value="T47883"/>
</dbReference>
<dbReference type="RefSeq" id="NP_001326963.1">
    <property type="nucleotide sequence ID" value="NM_001340056.1"/>
</dbReference>
<dbReference type="RefSeq" id="NP_191631.2">
    <property type="nucleotide sequence ID" value="NM_115936.4"/>
</dbReference>
<dbReference type="PDB" id="6GRF">
    <property type="method" value="X-ray"/>
    <property type="resolution" value="1.95 A"/>
    <property type="chains" value="A/B/C=22-253"/>
</dbReference>
<dbReference type="PDBsum" id="6GRF"/>
<dbReference type="SMR" id="Q6NKQ9"/>
<dbReference type="BioGRID" id="10557">
    <property type="interactions" value="51"/>
</dbReference>
<dbReference type="FunCoup" id="Q6NKQ9">
    <property type="interactions" value="1"/>
</dbReference>
<dbReference type="IntAct" id="Q6NKQ9">
    <property type="interactions" value="50"/>
</dbReference>
<dbReference type="STRING" id="3702.Q6NKQ9"/>
<dbReference type="TCDB" id="1.I.2.1.1">
    <property type="family name" value="the plant plasmodesmata (ppd) family"/>
</dbReference>
<dbReference type="PaxDb" id="3702-AT3G60720.1"/>
<dbReference type="ProteomicsDB" id="222647"/>
<dbReference type="EnsemblPlants" id="AT3G60720.1">
    <property type="protein sequence ID" value="AT3G60720.1"/>
    <property type="gene ID" value="AT3G60720"/>
</dbReference>
<dbReference type="GeneID" id="825243"/>
<dbReference type="Gramene" id="AT3G60720.1">
    <property type="protein sequence ID" value="AT3G60720.1"/>
    <property type="gene ID" value="AT3G60720"/>
</dbReference>
<dbReference type="KEGG" id="ath:AT3G60720"/>
<dbReference type="Araport" id="AT3G60720"/>
<dbReference type="TAIR" id="AT3G60720">
    <property type="gene designation" value="PDLP8"/>
</dbReference>
<dbReference type="eggNOG" id="ENOG502QU9X">
    <property type="taxonomic scope" value="Eukaryota"/>
</dbReference>
<dbReference type="HOGENOM" id="CLU_000288_33_0_1"/>
<dbReference type="InParanoid" id="Q6NKQ9"/>
<dbReference type="OMA" id="CYVRYEN"/>
<dbReference type="PhylomeDB" id="Q6NKQ9"/>
<dbReference type="PRO" id="PR:Q6NKQ9"/>
<dbReference type="Proteomes" id="UP000006548">
    <property type="component" value="Chromosome 3"/>
</dbReference>
<dbReference type="ExpressionAtlas" id="Q6NKQ9">
    <property type="expression patterns" value="baseline and differential"/>
</dbReference>
<dbReference type="GO" id="GO:0005886">
    <property type="term" value="C:plasma membrane"/>
    <property type="evidence" value="ECO:0007669"/>
    <property type="project" value="UniProtKB-SubCell"/>
</dbReference>
<dbReference type="GO" id="GO:0009506">
    <property type="term" value="C:plasmodesma"/>
    <property type="evidence" value="ECO:0007669"/>
    <property type="project" value="UniProtKB-SubCell"/>
</dbReference>
<dbReference type="CDD" id="cd23509">
    <property type="entry name" value="Gnk2-like"/>
    <property type="match status" value="2"/>
</dbReference>
<dbReference type="FunFam" id="3.30.430.20:FF:000011">
    <property type="entry name" value="Cysteine-rich repeat secretory protein 15"/>
    <property type="match status" value="1"/>
</dbReference>
<dbReference type="FunFam" id="3.30.430.20:FF:000001">
    <property type="entry name" value="cysteine-rich repeat secretory protein 3"/>
    <property type="match status" value="1"/>
</dbReference>
<dbReference type="Gene3D" id="3.30.430.20">
    <property type="entry name" value="Gnk2 domain, C-X8-C-X2-C motif"/>
    <property type="match status" value="2"/>
</dbReference>
<dbReference type="InterPro" id="IPR051378">
    <property type="entry name" value="Cell2Cell_Antifungal"/>
</dbReference>
<dbReference type="InterPro" id="IPR002902">
    <property type="entry name" value="GNK2"/>
</dbReference>
<dbReference type="InterPro" id="IPR038408">
    <property type="entry name" value="GNK2_sf"/>
</dbReference>
<dbReference type="PANTHER" id="PTHR32080">
    <property type="entry name" value="ANTIFUNGAL PROTEIN GINKBILOBIN-2-LIKE"/>
    <property type="match status" value="1"/>
</dbReference>
<dbReference type="PANTHER" id="PTHR32080:SF2">
    <property type="entry name" value="PLASMODESMATA-LOCATED PROTEIN 8"/>
    <property type="match status" value="1"/>
</dbReference>
<dbReference type="Pfam" id="PF01657">
    <property type="entry name" value="Stress-antifung"/>
    <property type="match status" value="2"/>
</dbReference>
<dbReference type="PROSITE" id="PS51473">
    <property type="entry name" value="GNK2"/>
    <property type="match status" value="2"/>
</dbReference>
<evidence type="ECO:0000250" key="1">
    <source>
        <dbReference type="UniProtKB" id="Q8GXV7"/>
    </source>
</evidence>
<evidence type="ECO:0000255" key="2"/>
<evidence type="ECO:0000255" key="3">
    <source>
        <dbReference type="PROSITE-ProRule" id="PRU00806"/>
    </source>
</evidence>
<evidence type="ECO:0000269" key="4">
    <source>
    </source>
</evidence>
<evidence type="ECO:0000269" key="5">
    <source>
    </source>
</evidence>
<evidence type="ECO:0000269" key="6">
    <source>
    </source>
</evidence>
<evidence type="ECO:0000303" key="7">
    <source>
    </source>
</evidence>
<evidence type="ECO:0000303" key="8">
    <source>
    </source>
</evidence>
<evidence type="ECO:0000303" key="9">
    <source>
    </source>
</evidence>
<evidence type="ECO:0000305" key="10"/>
<evidence type="ECO:0000305" key="11">
    <source>
    </source>
</evidence>
<evidence type="ECO:0007829" key="12">
    <source>
        <dbReference type="PDB" id="6GRF"/>
    </source>
</evidence>
<feature type="signal peptide" evidence="2">
    <location>
        <begin position="1"/>
        <end position="20"/>
    </location>
</feature>
<feature type="chain" id="PRO_0000296143" description="Plasmodesmata-located protein 8">
    <location>
        <begin position="21"/>
        <end position="279"/>
    </location>
</feature>
<feature type="topological domain" description="Extracellular" evidence="1">
    <location>
        <begin position="21"/>
        <end position="253"/>
    </location>
</feature>
<feature type="transmembrane region" description="Helical" evidence="2">
    <location>
        <begin position="254"/>
        <end position="274"/>
    </location>
</feature>
<feature type="topological domain" description="Cytoplasmic" evidence="1">
    <location>
        <begin position="275"/>
        <end position="279"/>
    </location>
</feature>
<feature type="domain" description="Gnk2-homologous 1" evidence="3">
    <location>
        <begin position="27"/>
        <end position="135"/>
    </location>
</feature>
<feature type="domain" description="Gnk2-homologous 2" evidence="3">
    <location>
        <begin position="137"/>
        <end position="237"/>
    </location>
</feature>
<feature type="region of interest" description="Necessary and sufficient for plasmodesmal targeting" evidence="1">
    <location>
        <begin position="254"/>
        <end position="274"/>
    </location>
</feature>
<feature type="disulfide bond" evidence="3">
    <location>
        <begin position="34"/>
        <end position="113"/>
    </location>
</feature>
<feature type="disulfide bond" evidence="3">
    <location>
        <begin position="89"/>
        <end position="98"/>
    </location>
</feature>
<feature type="disulfide bond" evidence="3">
    <location>
        <begin position="101"/>
        <end position="126"/>
    </location>
</feature>
<feature type="disulfide bond" evidence="3">
    <location>
        <begin position="148"/>
        <end position="215"/>
    </location>
</feature>
<feature type="disulfide bond" evidence="3">
    <location>
        <begin position="191"/>
        <end position="200"/>
    </location>
</feature>
<feature type="disulfide bond" evidence="3">
    <location>
        <begin position="203"/>
        <end position="228"/>
    </location>
</feature>
<feature type="strand" evidence="12">
    <location>
        <begin position="29"/>
        <end position="34"/>
    </location>
</feature>
<feature type="strand" evidence="12">
    <location>
        <begin position="41"/>
        <end position="43"/>
    </location>
</feature>
<feature type="helix" evidence="12">
    <location>
        <begin position="44"/>
        <end position="60"/>
    </location>
</feature>
<feature type="strand" evidence="12">
    <location>
        <begin position="64"/>
        <end position="71"/>
    </location>
</feature>
<feature type="strand" evidence="12">
    <location>
        <begin position="83"/>
        <end position="89"/>
    </location>
</feature>
<feature type="helix" evidence="12">
    <location>
        <begin position="95"/>
        <end position="112"/>
    </location>
</feature>
<feature type="strand" evidence="12">
    <location>
        <begin position="116"/>
        <end position="133"/>
    </location>
</feature>
<feature type="strand" evidence="12">
    <location>
        <begin position="143"/>
        <end position="148"/>
    </location>
</feature>
<feature type="helix" evidence="12">
    <location>
        <begin position="157"/>
        <end position="170"/>
    </location>
</feature>
<feature type="strand" evidence="12">
    <location>
        <begin position="175"/>
        <end position="182"/>
    </location>
</feature>
<feature type="strand" evidence="12">
    <location>
        <begin position="185"/>
        <end position="191"/>
    </location>
</feature>
<feature type="helix" evidence="12">
    <location>
        <begin position="197"/>
        <end position="214"/>
    </location>
</feature>
<feature type="strand" evidence="12">
    <location>
        <begin position="218"/>
        <end position="235"/>
    </location>
</feature>
<proteinExistence type="evidence at protein level"/>
<sequence>MRRLFLFSLLFLFFYSSSSSRSSSESHIFIYGGCSPEKYTPNTPFESNRDTFLSSVVTSSSDASFNSFAVGNDSSSSSSSSAVFGLYQCRDDLRSSDCSKCIQTSVDQITLICPYSYGASLQLEGCFLRYETNDFLGKPDTSLRYKKCSSKSVENDYDFFKRRDDVLSDLESTQLGYKVSRSGLVEGYAQCVGDLSPSDCTACLAESVGKLKNLCGSAVAAEVYLAQCYARYWGSGYYDFSSDPTNGDHVGKSIAIIVGVIAGFAILVVLLSLCRNSMH</sequence>
<gene>
    <name evidence="8" type="primary">PDLP8</name>
    <name evidence="7" type="synonym">CRRSP15</name>
    <name type="ordered locus">At3g60720</name>
    <name type="ORF">T4C21_130</name>
</gene>
<reference key="1">
    <citation type="journal article" date="2000" name="Nature">
        <title>Sequence and analysis of chromosome 3 of the plant Arabidopsis thaliana.</title>
        <authorList>
            <person name="Salanoubat M."/>
            <person name="Lemcke K."/>
            <person name="Rieger M."/>
            <person name="Ansorge W."/>
            <person name="Unseld M."/>
            <person name="Fartmann B."/>
            <person name="Valle G."/>
            <person name="Bloecker H."/>
            <person name="Perez-Alonso M."/>
            <person name="Obermaier B."/>
            <person name="Delseny M."/>
            <person name="Boutry M."/>
            <person name="Grivell L.A."/>
            <person name="Mache R."/>
            <person name="Puigdomenech P."/>
            <person name="De Simone V."/>
            <person name="Choisne N."/>
            <person name="Artiguenave F."/>
            <person name="Robert C."/>
            <person name="Brottier P."/>
            <person name="Wincker P."/>
            <person name="Cattolico L."/>
            <person name="Weissenbach J."/>
            <person name="Saurin W."/>
            <person name="Quetier F."/>
            <person name="Schaefer M."/>
            <person name="Mueller-Auer S."/>
            <person name="Gabel C."/>
            <person name="Fuchs M."/>
            <person name="Benes V."/>
            <person name="Wurmbach E."/>
            <person name="Drzonek H."/>
            <person name="Erfle H."/>
            <person name="Jordan N."/>
            <person name="Bangert S."/>
            <person name="Wiedelmann R."/>
            <person name="Kranz H."/>
            <person name="Voss H."/>
            <person name="Holland R."/>
            <person name="Brandt P."/>
            <person name="Nyakatura G."/>
            <person name="Vezzi A."/>
            <person name="D'Angelo M."/>
            <person name="Pallavicini A."/>
            <person name="Toppo S."/>
            <person name="Simionati B."/>
            <person name="Conrad A."/>
            <person name="Hornischer K."/>
            <person name="Kauer G."/>
            <person name="Loehnert T.-H."/>
            <person name="Nordsiek G."/>
            <person name="Reichelt J."/>
            <person name="Scharfe M."/>
            <person name="Schoen O."/>
            <person name="Bargues M."/>
            <person name="Terol J."/>
            <person name="Climent J."/>
            <person name="Navarro P."/>
            <person name="Collado C."/>
            <person name="Perez-Perez A."/>
            <person name="Ottenwaelder B."/>
            <person name="Duchemin D."/>
            <person name="Cooke R."/>
            <person name="Laudie M."/>
            <person name="Berger-Llauro C."/>
            <person name="Purnelle B."/>
            <person name="Masuy D."/>
            <person name="de Haan M."/>
            <person name="Maarse A.C."/>
            <person name="Alcaraz J.-P."/>
            <person name="Cottet A."/>
            <person name="Casacuberta E."/>
            <person name="Monfort A."/>
            <person name="Argiriou A."/>
            <person name="Flores M."/>
            <person name="Liguori R."/>
            <person name="Vitale D."/>
            <person name="Mannhaupt G."/>
            <person name="Haase D."/>
            <person name="Schoof H."/>
            <person name="Rudd S."/>
            <person name="Zaccaria P."/>
            <person name="Mewes H.-W."/>
            <person name="Mayer K.F.X."/>
            <person name="Kaul S."/>
            <person name="Town C.D."/>
            <person name="Koo H.L."/>
            <person name="Tallon L.J."/>
            <person name="Jenkins J."/>
            <person name="Rooney T."/>
            <person name="Rizzo M."/>
            <person name="Walts A."/>
            <person name="Utterback T."/>
            <person name="Fujii C.Y."/>
            <person name="Shea T.P."/>
            <person name="Creasy T.H."/>
            <person name="Haas B."/>
            <person name="Maiti R."/>
            <person name="Wu D."/>
            <person name="Peterson J."/>
            <person name="Van Aken S."/>
            <person name="Pai G."/>
            <person name="Militscher J."/>
            <person name="Sellers P."/>
            <person name="Gill J.E."/>
            <person name="Feldblyum T.V."/>
            <person name="Preuss D."/>
            <person name="Lin X."/>
            <person name="Nierman W.C."/>
            <person name="Salzberg S.L."/>
            <person name="White O."/>
            <person name="Venter J.C."/>
            <person name="Fraser C.M."/>
            <person name="Kaneko T."/>
            <person name="Nakamura Y."/>
            <person name="Sato S."/>
            <person name="Kato T."/>
            <person name="Asamizu E."/>
            <person name="Sasamoto S."/>
            <person name="Kimura T."/>
            <person name="Idesawa K."/>
            <person name="Kawashima K."/>
            <person name="Kishida Y."/>
            <person name="Kiyokawa C."/>
            <person name="Kohara M."/>
            <person name="Matsumoto M."/>
            <person name="Matsuno A."/>
            <person name="Muraki A."/>
            <person name="Nakayama S."/>
            <person name="Nakazaki N."/>
            <person name="Shinpo S."/>
            <person name="Takeuchi C."/>
            <person name="Wada T."/>
            <person name="Watanabe A."/>
            <person name="Yamada M."/>
            <person name="Yasuda M."/>
            <person name="Tabata S."/>
        </authorList>
    </citation>
    <scope>NUCLEOTIDE SEQUENCE [LARGE SCALE GENOMIC DNA]</scope>
    <source>
        <strain>cv. Columbia</strain>
    </source>
</reference>
<reference key="2">
    <citation type="journal article" date="2017" name="Plant J.">
        <title>Araport11: a complete reannotation of the Arabidopsis thaliana reference genome.</title>
        <authorList>
            <person name="Cheng C.Y."/>
            <person name="Krishnakumar V."/>
            <person name="Chan A.P."/>
            <person name="Thibaud-Nissen F."/>
            <person name="Schobel S."/>
            <person name="Town C.D."/>
        </authorList>
    </citation>
    <scope>GENOME REANNOTATION</scope>
    <source>
        <strain>cv. Columbia</strain>
    </source>
</reference>
<reference key="3">
    <citation type="submission" date="2004-05" db="EMBL/GenBank/DDBJ databases">
        <title>Arabidopsis ORF clones.</title>
        <authorList>
            <person name="Shinn P."/>
            <person name="Chen H."/>
            <person name="Cheuk R.F."/>
            <person name="Kim C.J."/>
            <person name="Carninci P."/>
            <person name="Hayashizaki Y."/>
            <person name="Ishida J."/>
            <person name="Kamiya A."/>
            <person name="Kawai J."/>
            <person name="Narusaka M."/>
            <person name="Sakurai T."/>
            <person name="Satou M."/>
            <person name="Seki M."/>
            <person name="Shinozaki K."/>
            <person name="Ecker J.R."/>
        </authorList>
    </citation>
    <scope>NUCLEOTIDE SEQUENCE [LARGE SCALE MRNA]</scope>
    <source>
        <strain>cv. Columbia</strain>
    </source>
</reference>
<reference key="4">
    <citation type="submission" date="2006-07" db="EMBL/GenBank/DDBJ databases">
        <title>Large-scale analysis of RIKEN Arabidopsis full-length (RAFL) cDNAs.</title>
        <authorList>
            <person name="Totoki Y."/>
            <person name="Seki M."/>
            <person name="Ishida J."/>
            <person name="Nakajima M."/>
            <person name="Enju A."/>
            <person name="Kamiya A."/>
            <person name="Narusaka M."/>
            <person name="Shin-i T."/>
            <person name="Nakagawa M."/>
            <person name="Sakamoto N."/>
            <person name="Oishi K."/>
            <person name="Kohara Y."/>
            <person name="Kobayashi M."/>
            <person name="Toyoda A."/>
            <person name="Sakaki Y."/>
            <person name="Sakurai T."/>
            <person name="Iida K."/>
            <person name="Akiyama K."/>
            <person name="Satou M."/>
            <person name="Toyoda T."/>
            <person name="Konagaya A."/>
            <person name="Carninci P."/>
            <person name="Kawai J."/>
            <person name="Hayashizaki Y."/>
            <person name="Shinozaki K."/>
        </authorList>
    </citation>
    <scope>NUCLEOTIDE SEQUENCE [LARGE SCALE MRNA]</scope>
    <source>
        <strain>cv. Columbia</strain>
    </source>
</reference>
<reference key="5">
    <citation type="journal article" date="2001" name="Plant Physiol.">
        <title>A superfamily of proteins with novel cysteine-rich repeats.</title>
        <authorList>
            <person name="Chen Z."/>
        </authorList>
    </citation>
    <scope>GENE FAMILY ORGANIZATION</scope>
    <scope>NOMENCLATURE</scope>
    <scope>CAUTION</scope>
</reference>
<reference key="6">
    <citation type="journal article" date="2008" name="Plant Signal. Behav.">
        <title>Symplastic domains in the Arabidopsis shoot apical meristem correlate with PDLP1 expression patterns.</title>
        <authorList>
            <person name="Bayer E."/>
            <person name="Thomas C."/>
            <person name="Maule A."/>
        </authorList>
    </citation>
    <scope>TISSUE SPECIFICITY</scope>
</reference>
<reference key="7">
    <citation type="journal article" date="2010" name="PLoS Pathog.">
        <title>A family of plasmodesmal proteins with receptor-like properties for plant viral movement proteins.</title>
        <authorList>
            <person name="Amari K."/>
            <person name="Boutant E."/>
            <person name="Hofmann C."/>
            <person name="Schmitt-Keichinger C."/>
            <person name="Fernandez-Calvino L."/>
            <person name="Didier P."/>
            <person name="Lerich A."/>
            <person name="Mutterer J."/>
            <person name="Thomas C.L."/>
            <person name="Heinlein M."/>
            <person name="Mely Y."/>
            <person name="Maule A.J."/>
            <person name="Ritzenthaler C."/>
        </authorList>
    </citation>
    <scope>SUBCELLULAR LOCATION</scope>
    <scope>INTERACTION WITH GRAPEVINE FANLEAF VIRUS 2B-MP PROTEIN</scope>
    <source>
        <strain>cv. Columbia</strain>
    </source>
</reference>
<reference key="8">
    <citation type="journal article" date="2017" name="Plant Signal. Behav.">
        <title>Arabidopsis thaliana Acyl-CoA-binding protein ACBP6 interacts with plasmodesmata-located protein PDLP8.</title>
        <authorList>
            <person name="Ye Z.W."/>
            <person name="Chen Q.F."/>
            <person name="Chye M.L."/>
        </authorList>
    </citation>
    <scope>INTERACTION WITH ACBP6</scope>
    <scope>SUBCELLULAR LOCATION</scope>
    <scope>TISSUE SPECIFICITY</scope>
    <scope>DISRUPTION PHENOTYPE</scope>
</reference>